<evidence type="ECO:0000269" key="1">
    <source>
    </source>
</evidence>
<evidence type="ECO:0000269" key="2">
    <source>
    </source>
</evidence>
<evidence type="ECO:0000305" key="3"/>
<name>CXCL1_HCMVM</name>
<accession>F5HBX1</accession>
<comment type="function">
    <text evidence="1 2">Acts as a functional chemokine, inducing calcium mobilization, chemotaxis, and degranulation of neutrophils. Contributes to the induction of neutrophil chemotaxis by interacting with host CXCR1 and CXCR2 receptors.</text>
</comment>
<comment type="subunit">
    <text evidence="2">Interacts with host CXCR1 and CXCR2.</text>
</comment>
<comment type="similarity">
    <text evidence="3">Belongs to the intercrine alpha (chemokine CxC) family.</text>
</comment>
<feature type="chain" id="PRO_0000418259" description="Chemokine vCXCL1">
    <location>
        <begin position="1"/>
        <end position="120"/>
    </location>
</feature>
<organism>
    <name type="scientific">Human cytomegalovirus (strain Merlin)</name>
    <name type="common">HHV-5</name>
    <name type="synonym">Human herpesvirus 5</name>
    <dbReference type="NCBI Taxonomy" id="295027"/>
    <lineage>
        <taxon>Viruses</taxon>
        <taxon>Duplodnaviria</taxon>
        <taxon>Heunggongvirae</taxon>
        <taxon>Peploviricota</taxon>
        <taxon>Herviviricetes</taxon>
        <taxon>Herpesvirales</taxon>
        <taxon>Orthoherpesviridae</taxon>
        <taxon>Betaherpesvirinae</taxon>
        <taxon>Cytomegalovirus</taxon>
        <taxon>Cytomegalovirus humanbeta5</taxon>
        <taxon>Human cytomegalovirus</taxon>
    </lineage>
</organism>
<reference key="1">
    <citation type="journal article" date="2004" name="J. Gen. Virol.">
        <title>Genetic content of wild-type human cytomegalovirus.</title>
        <authorList>
            <person name="Dolan A."/>
            <person name="Cunningham C."/>
            <person name="Hector R.D."/>
            <person name="Hassan-Walker A.F."/>
            <person name="Lee L."/>
            <person name="Addison C."/>
            <person name="Dargan D.J."/>
            <person name="McGeoch D.J."/>
            <person name="Gatherer D."/>
            <person name="Emery V.C."/>
            <person name="Griffiths P.D."/>
            <person name="Sinzger C."/>
            <person name="McSharry B.P."/>
            <person name="Wilkinson G.W.G."/>
            <person name="Davison A.J."/>
        </authorList>
    </citation>
    <scope>NUCLEOTIDE SEQUENCE [LARGE SCALE GENOMIC DNA]</scope>
</reference>
<reference key="2">
    <citation type="journal article" date="1999" name="Proc. Natl. Acad. Sci. U.S.A.">
        <title>Cytomegalovirus encodes a potent alpha chemokine.</title>
        <authorList>
            <person name="Penfold M.E."/>
            <person name="Dairaghi D.J."/>
            <person name="Duke G.M."/>
            <person name="Saederup N."/>
            <person name="Mocarski E.S."/>
            <person name="Kemble G.W."/>
            <person name="Schall T.J."/>
        </authorList>
    </citation>
    <scope>FUNCTION</scope>
    <source>
        <strain>Toledo</strain>
    </source>
</reference>
<reference key="3">
    <citation type="journal article" date="2010" name="J. Biol. Chem.">
        <title>The cytomegalovirus UL146 gene product vCXCL1 targets both CXCR1 and CXCR2 as an agonist.</title>
        <authorList>
            <person name="Luttichau H.R."/>
        </authorList>
    </citation>
    <scope>FUNCTION</scope>
    <scope>INTERACTION WITH CXCR1 AND CXCR2</scope>
</reference>
<gene>
    <name type="primary">UL146</name>
</gene>
<dbReference type="EMBL" id="AY446894">
    <property type="protein sequence ID" value="AAR31675.1"/>
    <property type="molecule type" value="Genomic_DNA"/>
</dbReference>
<dbReference type="RefSeq" id="YP_081571.1">
    <property type="nucleotide sequence ID" value="NC_006273.2"/>
</dbReference>
<dbReference type="SMR" id="F5HBX1"/>
<dbReference type="DNASU" id="3077566"/>
<dbReference type="GeneID" id="3077566"/>
<dbReference type="KEGG" id="vg:3077566"/>
<dbReference type="Reactome" id="R-HSA-9610379">
    <property type="pathway name" value="HCMV Late Events"/>
</dbReference>
<dbReference type="Proteomes" id="UP000000938">
    <property type="component" value="Segment"/>
</dbReference>
<dbReference type="GO" id="GO:0005576">
    <property type="term" value="C:extracellular region"/>
    <property type="evidence" value="ECO:0007669"/>
    <property type="project" value="InterPro"/>
</dbReference>
<dbReference type="GO" id="GO:0008009">
    <property type="term" value="F:chemokine activity"/>
    <property type="evidence" value="ECO:0007669"/>
    <property type="project" value="InterPro"/>
</dbReference>
<dbReference type="GO" id="GO:0006955">
    <property type="term" value="P:immune response"/>
    <property type="evidence" value="ECO:0007669"/>
    <property type="project" value="InterPro"/>
</dbReference>
<dbReference type="Gene3D" id="2.40.50.40">
    <property type="match status" value="1"/>
</dbReference>
<dbReference type="InterPro" id="IPR036048">
    <property type="entry name" value="Interleukin_8-like_sf"/>
</dbReference>
<dbReference type="SUPFAM" id="SSF54117">
    <property type="entry name" value="Interleukin 8-like chemokines"/>
    <property type="match status" value="1"/>
</dbReference>
<keyword id="KW-0945">Host-virus interaction</keyword>
<keyword id="KW-1086">Inhibition of host chemokines by virus</keyword>
<keyword id="KW-1185">Reference proteome</keyword>
<keyword id="KW-0899">Viral immunoevasion</keyword>
<protein>
    <recommendedName>
        <fullName>Chemokine vCXCL1</fullName>
    </recommendedName>
</protein>
<sequence length="120" mass="13872">MRLIFGALIISLTYMYYYEVHGTELRCKCLDGKKLPPKTIMLGNFWFHRESGGPRCNNNEYFLYLGGGKKHGPGVCLSPHHPFSKWLDKRNDNRWYNVNVTRQPERGPGKITVTLVGLKE</sequence>
<organismHost>
    <name type="scientific">Homo sapiens</name>
    <name type="common">Human</name>
    <dbReference type="NCBI Taxonomy" id="9606"/>
</organismHost>
<proteinExistence type="evidence at protein level"/>